<evidence type="ECO:0000255" key="1">
    <source>
        <dbReference type="HAMAP-Rule" id="MF_01328"/>
    </source>
</evidence>
<evidence type="ECO:0000256" key="2">
    <source>
        <dbReference type="SAM" id="MobiDB-lite"/>
    </source>
</evidence>
<evidence type="ECO:0000305" key="3"/>
<sequence>MQVELLNDQGLSSSKVDVSDTVFGREYNESLIHQVIVAFQANARQGTRAQKDREQVRHSTKKPFKQKGTGRARAGMTSSPLWRGGGRIFPNMPDENFTHKINKKMYRAGMASIFSQLAREGRLAVVDSLTVDSPKTKVLADKFKAMNLNSVLVIADQVDENLYLASRNLVNILVVEPRYADPLSLVHYKKVLVTKAAMDQLKEMFA</sequence>
<organism>
    <name type="scientific">Polaromonas naphthalenivorans (strain CJ2)</name>
    <dbReference type="NCBI Taxonomy" id="365044"/>
    <lineage>
        <taxon>Bacteria</taxon>
        <taxon>Pseudomonadati</taxon>
        <taxon>Pseudomonadota</taxon>
        <taxon>Betaproteobacteria</taxon>
        <taxon>Burkholderiales</taxon>
        <taxon>Comamonadaceae</taxon>
        <taxon>Polaromonas</taxon>
    </lineage>
</organism>
<keyword id="KW-1185">Reference proteome</keyword>
<keyword id="KW-0687">Ribonucleoprotein</keyword>
<keyword id="KW-0689">Ribosomal protein</keyword>
<keyword id="KW-0694">RNA-binding</keyword>
<keyword id="KW-0699">rRNA-binding</keyword>
<comment type="function">
    <text evidence="1">One of the primary rRNA binding proteins, this protein initially binds near the 5'-end of the 23S rRNA. It is important during the early stages of 50S assembly. It makes multiple contacts with different domains of the 23S rRNA in the assembled 50S subunit and ribosome.</text>
</comment>
<comment type="function">
    <text evidence="1">Forms part of the polypeptide exit tunnel.</text>
</comment>
<comment type="subunit">
    <text evidence="1">Part of the 50S ribosomal subunit.</text>
</comment>
<comment type="similarity">
    <text evidence="1">Belongs to the universal ribosomal protein uL4 family.</text>
</comment>
<dbReference type="EMBL" id="CP000529">
    <property type="protein sequence ID" value="ABM35529.1"/>
    <property type="molecule type" value="Genomic_DNA"/>
</dbReference>
<dbReference type="RefSeq" id="WP_011799638.1">
    <property type="nucleotide sequence ID" value="NC_008781.1"/>
</dbReference>
<dbReference type="SMR" id="A1VIQ1"/>
<dbReference type="STRING" id="365044.Pnap_0204"/>
<dbReference type="KEGG" id="pna:Pnap_0204"/>
<dbReference type="eggNOG" id="COG0088">
    <property type="taxonomic scope" value="Bacteria"/>
</dbReference>
<dbReference type="HOGENOM" id="CLU_041575_5_2_4"/>
<dbReference type="OrthoDB" id="9803201at2"/>
<dbReference type="Proteomes" id="UP000000644">
    <property type="component" value="Chromosome"/>
</dbReference>
<dbReference type="GO" id="GO:1990904">
    <property type="term" value="C:ribonucleoprotein complex"/>
    <property type="evidence" value="ECO:0007669"/>
    <property type="project" value="UniProtKB-KW"/>
</dbReference>
<dbReference type="GO" id="GO:0005840">
    <property type="term" value="C:ribosome"/>
    <property type="evidence" value="ECO:0007669"/>
    <property type="project" value="UniProtKB-KW"/>
</dbReference>
<dbReference type="GO" id="GO:0019843">
    <property type="term" value="F:rRNA binding"/>
    <property type="evidence" value="ECO:0007669"/>
    <property type="project" value="UniProtKB-UniRule"/>
</dbReference>
<dbReference type="GO" id="GO:0003735">
    <property type="term" value="F:structural constituent of ribosome"/>
    <property type="evidence" value="ECO:0007669"/>
    <property type="project" value="InterPro"/>
</dbReference>
<dbReference type="GO" id="GO:0006412">
    <property type="term" value="P:translation"/>
    <property type="evidence" value="ECO:0007669"/>
    <property type="project" value="UniProtKB-UniRule"/>
</dbReference>
<dbReference type="Gene3D" id="3.40.1370.10">
    <property type="match status" value="1"/>
</dbReference>
<dbReference type="HAMAP" id="MF_01328_B">
    <property type="entry name" value="Ribosomal_uL4_B"/>
    <property type="match status" value="1"/>
</dbReference>
<dbReference type="InterPro" id="IPR002136">
    <property type="entry name" value="Ribosomal_uL4"/>
</dbReference>
<dbReference type="InterPro" id="IPR013005">
    <property type="entry name" value="Ribosomal_uL4-like"/>
</dbReference>
<dbReference type="InterPro" id="IPR023574">
    <property type="entry name" value="Ribosomal_uL4_dom_sf"/>
</dbReference>
<dbReference type="NCBIfam" id="TIGR03953">
    <property type="entry name" value="rplD_bact"/>
    <property type="match status" value="1"/>
</dbReference>
<dbReference type="PANTHER" id="PTHR10746">
    <property type="entry name" value="50S RIBOSOMAL PROTEIN L4"/>
    <property type="match status" value="1"/>
</dbReference>
<dbReference type="PANTHER" id="PTHR10746:SF6">
    <property type="entry name" value="LARGE RIBOSOMAL SUBUNIT PROTEIN UL4M"/>
    <property type="match status" value="1"/>
</dbReference>
<dbReference type="Pfam" id="PF00573">
    <property type="entry name" value="Ribosomal_L4"/>
    <property type="match status" value="1"/>
</dbReference>
<dbReference type="SUPFAM" id="SSF52166">
    <property type="entry name" value="Ribosomal protein L4"/>
    <property type="match status" value="1"/>
</dbReference>
<gene>
    <name evidence="1" type="primary">rplD</name>
    <name type="ordered locus">Pnap_0204</name>
</gene>
<accession>A1VIQ1</accession>
<name>RL4_POLNA</name>
<proteinExistence type="inferred from homology"/>
<reference key="1">
    <citation type="journal article" date="2009" name="Environ. Microbiol.">
        <title>The genome of Polaromonas naphthalenivorans strain CJ2, isolated from coal tar-contaminated sediment, reveals physiological and metabolic versatility and evolution through extensive horizontal gene transfer.</title>
        <authorList>
            <person name="Yagi J.M."/>
            <person name="Sims D."/>
            <person name="Brettin T."/>
            <person name="Bruce D."/>
            <person name="Madsen E.L."/>
        </authorList>
    </citation>
    <scope>NUCLEOTIDE SEQUENCE [LARGE SCALE GENOMIC DNA]</scope>
    <source>
        <strain>CJ2</strain>
    </source>
</reference>
<protein>
    <recommendedName>
        <fullName evidence="1">Large ribosomal subunit protein uL4</fullName>
    </recommendedName>
    <alternativeName>
        <fullName evidence="3">50S ribosomal protein L4</fullName>
    </alternativeName>
</protein>
<feature type="chain" id="PRO_1000052462" description="Large ribosomal subunit protein uL4">
    <location>
        <begin position="1"/>
        <end position="206"/>
    </location>
</feature>
<feature type="region of interest" description="Disordered" evidence="2">
    <location>
        <begin position="46"/>
        <end position="77"/>
    </location>
</feature>
<feature type="compositionally biased region" description="Basic residues" evidence="2">
    <location>
        <begin position="58"/>
        <end position="70"/>
    </location>
</feature>